<evidence type="ECO:0000255" key="1">
    <source>
        <dbReference type="HAMAP-Rule" id="MF_00528"/>
    </source>
</evidence>
<gene>
    <name type="ordered locus">CD630_11430</name>
</gene>
<sequence length="194" mass="21813">MNIILASASPRRKEILENTNVRFDIIKNEIDEIILEGETPKHLVMRLAFEKSMSVASEHNEDVVIGADTVVVLDNAILGKPKDESCARDMLKRLSGREHQVITGISLINLCEDKKVIDYVISNVKFKTLSEQDIEDYLKTNESFDKAGAYGIQGYGALLVEEIRGDYFNIVGLPISRLGDLLKKYFSINLFYGV</sequence>
<comment type="function">
    <text evidence="1">Nucleoside triphosphate pyrophosphatase that hydrolyzes dTTP and UTP. May have a dual role in cell division arrest and in preventing the incorporation of modified nucleotides into cellular nucleic acids.</text>
</comment>
<comment type="catalytic activity">
    <reaction evidence="1">
        <text>dTTP + H2O = dTMP + diphosphate + H(+)</text>
        <dbReference type="Rhea" id="RHEA:28534"/>
        <dbReference type="ChEBI" id="CHEBI:15377"/>
        <dbReference type="ChEBI" id="CHEBI:15378"/>
        <dbReference type="ChEBI" id="CHEBI:33019"/>
        <dbReference type="ChEBI" id="CHEBI:37568"/>
        <dbReference type="ChEBI" id="CHEBI:63528"/>
        <dbReference type="EC" id="3.6.1.9"/>
    </reaction>
</comment>
<comment type="catalytic activity">
    <reaction evidence="1">
        <text>UTP + H2O = UMP + diphosphate + H(+)</text>
        <dbReference type="Rhea" id="RHEA:29395"/>
        <dbReference type="ChEBI" id="CHEBI:15377"/>
        <dbReference type="ChEBI" id="CHEBI:15378"/>
        <dbReference type="ChEBI" id="CHEBI:33019"/>
        <dbReference type="ChEBI" id="CHEBI:46398"/>
        <dbReference type="ChEBI" id="CHEBI:57865"/>
        <dbReference type="EC" id="3.6.1.9"/>
    </reaction>
</comment>
<comment type="cofactor">
    <cofactor evidence="1">
        <name>a divalent metal cation</name>
        <dbReference type="ChEBI" id="CHEBI:60240"/>
    </cofactor>
</comment>
<comment type="subcellular location">
    <subcellularLocation>
        <location evidence="1">Cytoplasm</location>
    </subcellularLocation>
</comment>
<comment type="similarity">
    <text evidence="1">Belongs to the Maf family. YhdE subfamily.</text>
</comment>
<organism>
    <name type="scientific">Clostridioides difficile (strain 630)</name>
    <name type="common">Peptoclostridium difficile</name>
    <dbReference type="NCBI Taxonomy" id="272563"/>
    <lineage>
        <taxon>Bacteria</taxon>
        <taxon>Bacillati</taxon>
        <taxon>Bacillota</taxon>
        <taxon>Clostridia</taxon>
        <taxon>Peptostreptococcales</taxon>
        <taxon>Peptostreptococcaceae</taxon>
        <taxon>Clostridioides</taxon>
    </lineage>
</organism>
<reference key="1">
    <citation type="journal article" date="2006" name="Nat. Genet.">
        <title>The multidrug-resistant human pathogen Clostridium difficile has a highly mobile, mosaic genome.</title>
        <authorList>
            <person name="Sebaihia M."/>
            <person name="Wren B.W."/>
            <person name="Mullany P."/>
            <person name="Fairweather N.F."/>
            <person name="Minton N."/>
            <person name="Stabler R."/>
            <person name="Thomson N.R."/>
            <person name="Roberts A.P."/>
            <person name="Cerdeno-Tarraga A.M."/>
            <person name="Wang H."/>
            <person name="Holden M.T.G."/>
            <person name="Wright A."/>
            <person name="Churcher C."/>
            <person name="Quail M.A."/>
            <person name="Baker S."/>
            <person name="Bason N."/>
            <person name="Brooks K."/>
            <person name="Chillingworth T."/>
            <person name="Cronin A."/>
            <person name="Davis P."/>
            <person name="Dowd L."/>
            <person name="Fraser A."/>
            <person name="Feltwell T."/>
            <person name="Hance Z."/>
            <person name="Holroyd S."/>
            <person name="Jagels K."/>
            <person name="Moule S."/>
            <person name="Mungall K."/>
            <person name="Price C."/>
            <person name="Rabbinowitsch E."/>
            <person name="Sharp S."/>
            <person name="Simmonds M."/>
            <person name="Stevens K."/>
            <person name="Unwin L."/>
            <person name="Whithead S."/>
            <person name="Dupuy B."/>
            <person name="Dougan G."/>
            <person name="Barrell B."/>
            <person name="Parkhill J."/>
        </authorList>
    </citation>
    <scope>NUCLEOTIDE SEQUENCE [LARGE SCALE GENOMIC DNA]</scope>
    <source>
        <strain>630</strain>
    </source>
</reference>
<proteinExistence type="inferred from homology"/>
<dbReference type="EC" id="3.6.1.9" evidence="1"/>
<dbReference type="EMBL" id="AM180355">
    <property type="protein sequence ID" value="CAJ67996.1"/>
    <property type="molecule type" value="Genomic_DNA"/>
</dbReference>
<dbReference type="RefSeq" id="WP_003428485.1">
    <property type="nucleotide sequence ID" value="NZ_JAUPES010000006.1"/>
</dbReference>
<dbReference type="RefSeq" id="YP_001087635.1">
    <property type="nucleotide sequence ID" value="NC_009089.1"/>
</dbReference>
<dbReference type="SMR" id="Q18B07"/>
<dbReference type="STRING" id="272563.CD630_11430"/>
<dbReference type="EnsemblBacteria" id="CAJ67996">
    <property type="protein sequence ID" value="CAJ67996"/>
    <property type="gene ID" value="CD630_11430"/>
</dbReference>
<dbReference type="KEGG" id="cdf:CD630_11430"/>
<dbReference type="KEGG" id="pdc:CDIF630_01290"/>
<dbReference type="PATRIC" id="fig|272563.120.peg.1192"/>
<dbReference type="eggNOG" id="COG0424">
    <property type="taxonomic scope" value="Bacteria"/>
</dbReference>
<dbReference type="OrthoDB" id="9807767at2"/>
<dbReference type="PhylomeDB" id="Q18B07"/>
<dbReference type="BioCyc" id="PDIF272563:G12WB-1273-MONOMER"/>
<dbReference type="Proteomes" id="UP000001978">
    <property type="component" value="Chromosome"/>
</dbReference>
<dbReference type="GO" id="GO:0005737">
    <property type="term" value="C:cytoplasm"/>
    <property type="evidence" value="ECO:0007669"/>
    <property type="project" value="UniProtKB-SubCell"/>
</dbReference>
<dbReference type="GO" id="GO:0036218">
    <property type="term" value="F:dTTP diphosphatase activity"/>
    <property type="evidence" value="ECO:0007669"/>
    <property type="project" value="RHEA"/>
</dbReference>
<dbReference type="GO" id="GO:0036221">
    <property type="term" value="F:UTP diphosphatase activity"/>
    <property type="evidence" value="ECO:0007669"/>
    <property type="project" value="RHEA"/>
</dbReference>
<dbReference type="GO" id="GO:0009117">
    <property type="term" value="P:nucleotide metabolic process"/>
    <property type="evidence" value="ECO:0007669"/>
    <property type="project" value="UniProtKB-KW"/>
</dbReference>
<dbReference type="CDD" id="cd00555">
    <property type="entry name" value="Maf"/>
    <property type="match status" value="1"/>
</dbReference>
<dbReference type="FunFam" id="3.90.950.10:FF:000005">
    <property type="entry name" value="7-methyl-GTP pyrophosphatase"/>
    <property type="match status" value="1"/>
</dbReference>
<dbReference type="Gene3D" id="3.90.950.10">
    <property type="match status" value="1"/>
</dbReference>
<dbReference type="HAMAP" id="MF_00528">
    <property type="entry name" value="Maf"/>
    <property type="match status" value="1"/>
</dbReference>
<dbReference type="InterPro" id="IPR029001">
    <property type="entry name" value="ITPase-like_fam"/>
</dbReference>
<dbReference type="InterPro" id="IPR003697">
    <property type="entry name" value="Maf-like"/>
</dbReference>
<dbReference type="NCBIfam" id="TIGR00172">
    <property type="entry name" value="maf"/>
    <property type="match status" value="1"/>
</dbReference>
<dbReference type="PANTHER" id="PTHR43213">
    <property type="entry name" value="BIFUNCTIONAL DTTP/UTP PYROPHOSPHATASE/METHYLTRANSFERASE PROTEIN-RELATED"/>
    <property type="match status" value="1"/>
</dbReference>
<dbReference type="PANTHER" id="PTHR43213:SF5">
    <property type="entry name" value="BIFUNCTIONAL DTTP_UTP PYROPHOSPHATASE_METHYLTRANSFERASE PROTEIN-RELATED"/>
    <property type="match status" value="1"/>
</dbReference>
<dbReference type="Pfam" id="PF02545">
    <property type="entry name" value="Maf"/>
    <property type="match status" value="1"/>
</dbReference>
<dbReference type="PIRSF" id="PIRSF006305">
    <property type="entry name" value="Maf"/>
    <property type="match status" value="1"/>
</dbReference>
<dbReference type="SUPFAM" id="SSF52972">
    <property type="entry name" value="ITPase-like"/>
    <property type="match status" value="1"/>
</dbReference>
<feature type="chain" id="PRO_0000267285" description="dTTP/UTP pyrophosphatase">
    <location>
        <begin position="1"/>
        <end position="194"/>
    </location>
</feature>
<feature type="active site" description="Proton acceptor" evidence="1">
    <location>
        <position position="68"/>
    </location>
</feature>
<feature type="site" description="Important for substrate specificity" evidence="1">
    <location>
        <position position="11"/>
    </location>
</feature>
<feature type="site" description="Important for substrate specificity" evidence="1">
    <location>
        <position position="69"/>
    </location>
</feature>
<feature type="site" description="Important for substrate specificity" evidence="1">
    <location>
        <position position="153"/>
    </location>
</feature>
<keyword id="KW-0963">Cytoplasm</keyword>
<keyword id="KW-0378">Hydrolase</keyword>
<keyword id="KW-0546">Nucleotide metabolism</keyword>
<keyword id="KW-1185">Reference proteome</keyword>
<name>NTPPA_CLOD6</name>
<accession>Q18B07</accession>
<protein>
    <recommendedName>
        <fullName evidence="1">dTTP/UTP pyrophosphatase</fullName>
        <shortName evidence="1">dTTPase/UTPase</shortName>
        <ecNumber evidence="1">3.6.1.9</ecNumber>
    </recommendedName>
    <alternativeName>
        <fullName evidence="1">Nucleoside triphosphate pyrophosphatase</fullName>
    </alternativeName>
    <alternativeName>
        <fullName evidence="1">Nucleotide pyrophosphatase</fullName>
        <shortName evidence="1">Nucleotide PPase</shortName>
    </alternativeName>
</protein>